<dbReference type="EC" id="2.7.11.24"/>
<dbReference type="EMBL" id="BC142510">
    <property type="protein sequence ID" value="AAI42511.1"/>
    <property type="molecule type" value="mRNA"/>
</dbReference>
<dbReference type="RefSeq" id="NP_001092550.1">
    <property type="nucleotide sequence ID" value="NM_001099080.2"/>
</dbReference>
<dbReference type="RefSeq" id="XP_005220440.1">
    <property type="nucleotide sequence ID" value="XM_005220383.5"/>
</dbReference>
<dbReference type="SMR" id="A5PKJ4"/>
<dbReference type="FunCoup" id="A5PKJ4">
    <property type="interactions" value="2746"/>
</dbReference>
<dbReference type="STRING" id="9913.ENSBTAP00000001347"/>
<dbReference type="PaxDb" id="9913-ENSBTAP00000001347"/>
<dbReference type="GeneID" id="537703"/>
<dbReference type="KEGG" id="bta:537703"/>
<dbReference type="CTD" id="5598"/>
<dbReference type="VEuPathDB" id="HostDB:ENSBTAG00000001014"/>
<dbReference type="eggNOG" id="KOG0660">
    <property type="taxonomic scope" value="Eukaryota"/>
</dbReference>
<dbReference type="HOGENOM" id="CLU_008789_1_0_1"/>
<dbReference type="InParanoid" id="A5PKJ4"/>
<dbReference type="OMA" id="RWTKMID"/>
<dbReference type="OrthoDB" id="192887at2759"/>
<dbReference type="TreeFam" id="TF105099"/>
<dbReference type="Reactome" id="R-BTA-198753">
    <property type="pathway name" value="ERK/MAPK targets"/>
</dbReference>
<dbReference type="Reactome" id="R-BTA-198765">
    <property type="pathway name" value="Signalling to ERK5"/>
</dbReference>
<dbReference type="Reactome" id="R-BTA-202670">
    <property type="pathway name" value="ERKs are inactivated"/>
</dbReference>
<dbReference type="Reactome" id="R-BTA-2559582">
    <property type="pathway name" value="Senescence-Associated Secretory Phenotype (SASP)"/>
</dbReference>
<dbReference type="Reactome" id="R-BTA-881907">
    <property type="pathway name" value="Gastrin-CREB signalling pathway via PKC and MAPK"/>
</dbReference>
<dbReference type="Reactome" id="R-BTA-8853659">
    <property type="pathway name" value="RET signaling"/>
</dbReference>
<dbReference type="Proteomes" id="UP000009136">
    <property type="component" value="Chromosome 19"/>
</dbReference>
<dbReference type="Bgee" id="ENSBTAG00000001014">
    <property type="expression patterns" value="Expressed in trachea and 104 other cell types or tissues"/>
</dbReference>
<dbReference type="GO" id="GO:0005737">
    <property type="term" value="C:cytoplasm"/>
    <property type="evidence" value="ECO:0000250"/>
    <property type="project" value="UniProtKB"/>
</dbReference>
<dbReference type="GO" id="GO:0005634">
    <property type="term" value="C:nucleus"/>
    <property type="evidence" value="ECO:0000250"/>
    <property type="project" value="UniProtKB"/>
</dbReference>
<dbReference type="GO" id="GO:0016605">
    <property type="term" value="C:PML body"/>
    <property type="evidence" value="ECO:0000250"/>
    <property type="project" value="UniProtKB"/>
</dbReference>
<dbReference type="GO" id="GO:0005524">
    <property type="term" value="F:ATP binding"/>
    <property type="evidence" value="ECO:0007669"/>
    <property type="project" value="UniProtKB-KW"/>
</dbReference>
<dbReference type="GO" id="GO:0004707">
    <property type="term" value="F:MAP kinase activity"/>
    <property type="evidence" value="ECO:0007669"/>
    <property type="project" value="UniProtKB-EC"/>
</dbReference>
<dbReference type="GO" id="GO:0106310">
    <property type="term" value="F:protein serine kinase activity"/>
    <property type="evidence" value="ECO:0007669"/>
    <property type="project" value="RHEA"/>
</dbReference>
<dbReference type="GO" id="GO:0004674">
    <property type="term" value="F:protein serine/threonine kinase activity"/>
    <property type="evidence" value="ECO:0000318"/>
    <property type="project" value="GO_Central"/>
</dbReference>
<dbReference type="GO" id="GO:0030154">
    <property type="term" value="P:cell differentiation"/>
    <property type="evidence" value="ECO:0007669"/>
    <property type="project" value="UniProtKB-KW"/>
</dbReference>
<dbReference type="GO" id="GO:0035556">
    <property type="term" value="P:intracellular signal transduction"/>
    <property type="evidence" value="ECO:0000318"/>
    <property type="project" value="GO_Central"/>
</dbReference>
<dbReference type="GO" id="GO:0000165">
    <property type="term" value="P:MAPK cascade"/>
    <property type="evidence" value="ECO:0000250"/>
    <property type="project" value="UniProtKB"/>
</dbReference>
<dbReference type="GO" id="GO:0034392">
    <property type="term" value="P:negative regulation of smooth muscle cell apoptotic process"/>
    <property type="evidence" value="ECO:0000250"/>
    <property type="project" value="UniProtKB"/>
</dbReference>
<dbReference type="CDD" id="cd07855">
    <property type="entry name" value="STKc_ERK5"/>
    <property type="match status" value="1"/>
</dbReference>
<dbReference type="FunFam" id="1.10.510.10:FF:000013">
    <property type="entry name" value="Mitogen-activated protein kinase"/>
    <property type="match status" value="1"/>
</dbReference>
<dbReference type="FunFam" id="3.30.200.20:FF:000242">
    <property type="entry name" value="Mitogen-activated protein kinase"/>
    <property type="match status" value="1"/>
</dbReference>
<dbReference type="Gene3D" id="3.30.200.20">
    <property type="entry name" value="Phosphorylase Kinase, domain 1"/>
    <property type="match status" value="1"/>
</dbReference>
<dbReference type="Gene3D" id="1.10.510.10">
    <property type="entry name" value="Transferase(Phosphotransferase) domain 1"/>
    <property type="match status" value="1"/>
</dbReference>
<dbReference type="InterPro" id="IPR011009">
    <property type="entry name" value="Kinase-like_dom_sf"/>
</dbReference>
<dbReference type="InterPro" id="IPR050117">
    <property type="entry name" value="MAP_kinase"/>
</dbReference>
<dbReference type="InterPro" id="IPR003527">
    <property type="entry name" value="MAP_kinase_CS"/>
</dbReference>
<dbReference type="InterPro" id="IPR000719">
    <property type="entry name" value="Prot_kinase_dom"/>
</dbReference>
<dbReference type="InterPro" id="IPR017441">
    <property type="entry name" value="Protein_kinase_ATP_BS"/>
</dbReference>
<dbReference type="InterPro" id="IPR008271">
    <property type="entry name" value="Ser/Thr_kinase_AS"/>
</dbReference>
<dbReference type="PANTHER" id="PTHR24055">
    <property type="entry name" value="MITOGEN-ACTIVATED PROTEIN KINASE"/>
    <property type="match status" value="1"/>
</dbReference>
<dbReference type="Pfam" id="PF00069">
    <property type="entry name" value="Pkinase"/>
    <property type="match status" value="1"/>
</dbReference>
<dbReference type="SMART" id="SM00220">
    <property type="entry name" value="S_TKc"/>
    <property type="match status" value="1"/>
</dbReference>
<dbReference type="SUPFAM" id="SSF56112">
    <property type="entry name" value="Protein kinase-like (PK-like)"/>
    <property type="match status" value="1"/>
</dbReference>
<dbReference type="PROSITE" id="PS01351">
    <property type="entry name" value="MAPK"/>
    <property type="match status" value="1"/>
</dbReference>
<dbReference type="PROSITE" id="PS00107">
    <property type="entry name" value="PROTEIN_KINASE_ATP"/>
    <property type="match status" value="1"/>
</dbReference>
<dbReference type="PROSITE" id="PS50011">
    <property type="entry name" value="PROTEIN_KINASE_DOM"/>
    <property type="match status" value="1"/>
</dbReference>
<dbReference type="PROSITE" id="PS00108">
    <property type="entry name" value="PROTEIN_KINASE_ST"/>
    <property type="match status" value="1"/>
</dbReference>
<keyword id="KW-0007">Acetylation</keyword>
<keyword id="KW-0067">ATP-binding</keyword>
<keyword id="KW-0131">Cell cycle</keyword>
<keyword id="KW-0963">Cytoplasm</keyword>
<keyword id="KW-0221">Differentiation</keyword>
<keyword id="KW-0418">Kinase</keyword>
<keyword id="KW-0547">Nucleotide-binding</keyword>
<keyword id="KW-0539">Nucleus</keyword>
<keyword id="KW-0597">Phosphoprotein</keyword>
<keyword id="KW-1185">Reference proteome</keyword>
<keyword id="KW-0723">Serine/threonine-protein kinase</keyword>
<keyword id="KW-0808">Transferase</keyword>
<comment type="function">
    <text evidence="1 2">Plays a role in various cellular processes such as proliferation, differentiation and cell survival. The upstream activator of MAPK7 is the MAPK kinase MAP2K5. Upon activation, it translocates to the nucleus and phosphorylates various downstream targets including MEF2C. EGF activates MAPK7 through a Ras-independent and MAP2K5-dependent pathway. As part of the MAPK/ERK signaling pathway, acts as a negative regulator of apoptosis in cardiomyocytes via interaction with STUB1/CHIP and promotion of STUB1-mediated ubiquitination and degradation of ICER-type isoforms of CREM (By similarity). May have a role in muscle cell differentiation. May be important for endothelial function and maintenance of blood vessel integrity. MAP2K5 and MAPK7 interact specifically with one another and not with MEK1/ERK1 or MEK2/ERK2 pathways. Phosphorylates SGK1 at Ser-78 and this is required for growth factor-induced cell cycle progression (By similarity). Involved in the regulation of p53/TP53 by disrupting the PML-MDM2 interaction (By similarity).</text>
</comment>
<comment type="catalytic activity">
    <reaction>
        <text>L-seryl-[protein] + ATP = O-phospho-L-seryl-[protein] + ADP + H(+)</text>
        <dbReference type="Rhea" id="RHEA:17989"/>
        <dbReference type="Rhea" id="RHEA-COMP:9863"/>
        <dbReference type="Rhea" id="RHEA-COMP:11604"/>
        <dbReference type="ChEBI" id="CHEBI:15378"/>
        <dbReference type="ChEBI" id="CHEBI:29999"/>
        <dbReference type="ChEBI" id="CHEBI:30616"/>
        <dbReference type="ChEBI" id="CHEBI:83421"/>
        <dbReference type="ChEBI" id="CHEBI:456216"/>
        <dbReference type="EC" id="2.7.11.24"/>
    </reaction>
</comment>
<comment type="catalytic activity">
    <reaction>
        <text>L-threonyl-[protein] + ATP = O-phospho-L-threonyl-[protein] + ADP + H(+)</text>
        <dbReference type="Rhea" id="RHEA:46608"/>
        <dbReference type="Rhea" id="RHEA-COMP:11060"/>
        <dbReference type="Rhea" id="RHEA-COMP:11605"/>
        <dbReference type="ChEBI" id="CHEBI:15378"/>
        <dbReference type="ChEBI" id="CHEBI:30013"/>
        <dbReference type="ChEBI" id="CHEBI:30616"/>
        <dbReference type="ChEBI" id="CHEBI:61977"/>
        <dbReference type="ChEBI" id="CHEBI:456216"/>
        <dbReference type="EC" id="2.7.11.24"/>
    </reaction>
</comment>
<comment type="cofactor">
    <cofactor evidence="1">
        <name>Mg(2+)</name>
        <dbReference type="ChEBI" id="CHEBI:18420"/>
    </cofactor>
</comment>
<comment type="activity regulation">
    <text evidence="1">Activated by tyrosine and threonine phosphorylation. Activated in response to hyperosmolarity, hydrogen peroxide, and epidermal growth factor (EGF) (By similarity).</text>
</comment>
<comment type="subunit">
    <text evidence="1 3">Interacts with MAP2K5. Forms oligomers (By similarity). Interacts with MEF2A, MEF2C and MEF2D; the interaction phosphorylates the MEF2s and enhances transcriptional activity of MEF2A, MEF2C but not MEF2D (By similarity). Interacts with SGK1 (By similarity). Interacts with PML (By similarity). Interacts (via N-terminal half) with HSP90AB1-CDC37 chaperone complex in resting cells; the interaction is MAP2K5-independent and prevents MAPK7 from ubiquitination and proteasomal degradation (By similarity). Interacts with STUB1/CHIP; the interaction is enhanced in the presence of IGF1 or MAP2K5 and promotes STUB1/CHIP E3 ligase activity (By similarity).</text>
</comment>
<comment type="subcellular location">
    <subcellularLocation>
        <location>Cytoplasm</location>
    </subcellularLocation>
    <subcellularLocation>
        <location>Nucleus</location>
    </subcellularLocation>
    <subcellularLocation>
        <location evidence="1">Nucleus</location>
        <location evidence="1">PML body</location>
    </subcellularLocation>
    <text evidence="1">Translocates to the nucleus upon activation.</text>
</comment>
<comment type="domain">
    <text>The second proline-rich region may interact with actin targeting the kinase to a specific location in the cell.</text>
</comment>
<comment type="domain">
    <text>The TXY motif contains the threonine and tyrosine residues whose phosphorylation activates the MAP kinases.</text>
</comment>
<comment type="PTM">
    <text evidence="1">Dually phosphorylated on Thr-219 and Tyr-221, which activates the enzyme.</text>
</comment>
<comment type="similarity">
    <text evidence="7">Belongs to the protein kinase superfamily. CMGC Ser/Thr protein kinase family. MAP kinase subfamily.</text>
</comment>
<reference key="1">
    <citation type="submission" date="2007-06" db="EMBL/GenBank/DDBJ databases">
        <authorList>
            <consortium name="NIH - Mammalian Gene Collection (MGC) project"/>
        </authorList>
    </citation>
    <scope>NUCLEOTIDE SEQUENCE [LARGE SCALE MRNA]</scope>
    <source>
        <strain>Hereford</strain>
        <tissue>Fetal liver</tissue>
    </source>
</reference>
<sequence length="781" mass="84832">MAEPLKEDDGEDGSGEPPGPVKAEPAGTAASVAAKNLALLKARSFDVTFDVGDEYEIIETIGNGAYGVVSSARRRLTGQQVAIKKIPNAFDVVTNAKRTLRELKILKHFKHDNIIAIKDILRPTVPYGEFKSVYVVLDLMESDLHQIIHSSQPLTLEHVRYFLYQLLRGLKYMHSAQVIHRDLKPSNLLVNENCELKIGDFGMARGLCTSPAEHQYFMTEYVATRWYRAPELMLSLHEYTQAIDLWSVGCIFGEMLARRQLFPGKNYVHQLQLIMTVLGTPSPAVIQAVGAERVRAYIQSLPPRQPVPWETVYPGADRQALSLLGRMLRFEPSARVSAAAALRHPFLAKYHDPDDEPDCAPPFDFAFDREALTRERIKEAIVAEIEDFHARREGIRQQIRFQPSLQPVASEPGCPDVEMPSPWAPSGDCAMESPPPAPLPCPGPAPDTIDLTLQPPPPASEPAPPKKEGAISDNTKAALKAALLKSLRSRLRDGPSAPLEAPEPRKPVTAQERQREREEKRRRRQERAKEREKRRQERERKERGAGVSGGPSADPLAGLVLSDNDRSLLERWTRMAQPPAPAPATARPPSPPAGPATQPTGPLPQPACPPPAPAAGPAAPQTTAASGLLAPQPLVPPPGLPGPSALSVLPYFPSGPPPPDPGGAPQPSTSESPDVTLVTQQLSKSQVEDPLPPVFSGTPKGSGAGYGVGFDLEEFLNQSFDMGVADGPQDGQADSASLSASLLADWLEGHGMNPADIESLQREIQMDSPMLLADLPDLQEP</sequence>
<accession>A5PKJ4</accession>
<organism>
    <name type="scientific">Bos taurus</name>
    <name type="common">Bovine</name>
    <dbReference type="NCBI Taxonomy" id="9913"/>
    <lineage>
        <taxon>Eukaryota</taxon>
        <taxon>Metazoa</taxon>
        <taxon>Chordata</taxon>
        <taxon>Craniata</taxon>
        <taxon>Vertebrata</taxon>
        <taxon>Euteleostomi</taxon>
        <taxon>Mammalia</taxon>
        <taxon>Eutheria</taxon>
        <taxon>Laurasiatheria</taxon>
        <taxon>Artiodactyla</taxon>
        <taxon>Ruminantia</taxon>
        <taxon>Pecora</taxon>
        <taxon>Bovidae</taxon>
        <taxon>Bovinae</taxon>
        <taxon>Bos</taxon>
    </lineage>
</organism>
<gene>
    <name type="primary">MAPK7</name>
</gene>
<name>MK07_BOVIN</name>
<evidence type="ECO:0000250" key="1"/>
<evidence type="ECO:0000250" key="2">
    <source>
        <dbReference type="UniProtKB" id="P0C865"/>
    </source>
</evidence>
<evidence type="ECO:0000250" key="3">
    <source>
        <dbReference type="UniProtKB" id="Q13164"/>
    </source>
</evidence>
<evidence type="ECO:0000255" key="4">
    <source>
        <dbReference type="PROSITE-ProRule" id="PRU00159"/>
    </source>
</evidence>
<evidence type="ECO:0000255" key="5">
    <source>
        <dbReference type="PROSITE-ProRule" id="PRU10027"/>
    </source>
</evidence>
<evidence type="ECO:0000256" key="6">
    <source>
        <dbReference type="SAM" id="MobiDB-lite"/>
    </source>
</evidence>
<evidence type="ECO:0000305" key="7"/>
<protein>
    <recommendedName>
        <fullName>Mitogen-activated protein kinase 7</fullName>
        <shortName>MAP kinase 7</shortName>
        <shortName>MAPK 7</shortName>
        <ecNumber>2.7.11.24</ecNumber>
    </recommendedName>
</protein>
<proteinExistence type="evidence at transcript level"/>
<feature type="initiator methionine" description="Removed" evidence="3">
    <location>
        <position position="1"/>
    </location>
</feature>
<feature type="chain" id="PRO_0000349104" description="Mitogen-activated protein kinase 7">
    <location>
        <begin position="2"/>
        <end position="781"/>
    </location>
</feature>
<feature type="domain" description="Protein kinase" evidence="4">
    <location>
        <begin position="55"/>
        <end position="347"/>
    </location>
</feature>
<feature type="region of interest" description="Disordered" evidence="6">
    <location>
        <begin position="1"/>
        <end position="27"/>
    </location>
</feature>
<feature type="region of interest" description="Required for cytoplasmic targeting" evidence="1">
    <location>
        <begin position="2"/>
        <end position="77"/>
    </location>
</feature>
<feature type="region of interest" description="Required for binding to MAP2K5" evidence="1">
    <location>
        <begin position="78"/>
        <end position="139"/>
    </location>
</feature>
<feature type="region of interest" description="Necessary for oligomerization" evidence="1">
    <location>
        <begin position="140"/>
        <end position="406"/>
    </location>
</feature>
<feature type="region of interest" description="Disordered" evidence="6">
    <location>
        <begin position="402"/>
        <end position="708"/>
    </location>
</feature>
<feature type="region of interest" description="May not be required for kinase activity; required to stimulate MEF2C activity" evidence="1">
    <location>
        <begin position="407"/>
        <end position="781"/>
    </location>
</feature>
<feature type="short sequence motif" description="TXY" evidence="1">
    <location>
        <begin position="219"/>
        <end position="221"/>
    </location>
</feature>
<feature type="short sequence motif" description="Nuclear localization signal" evidence="1">
    <location>
        <begin position="505"/>
        <end position="539"/>
    </location>
</feature>
<feature type="compositionally biased region" description="Pro residues" evidence="6">
    <location>
        <begin position="433"/>
        <end position="445"/>
    </location>
</feature>
<feature type="compositionally biased region" description="Pro residues" evidence="6">
    <location>
        <begin position="454"/>
        <end position="463"/>
    </location>
</feature>
<feature type="compositionally biased region" description="Low complexity" evidence="6">
    <location>
        <begin position="476"/>
        <end position="486"/>
    </location>
</feature>
<feature type="compositionally biased region" description="Basic and acidic residues" evidence="6">
    <location>
        <begin position="502"/>
        <end position="519"/>
    </location>
</feature>
<feature type="compositionally biased region" description="Basic and acidic residues" evidence="6">
    <location>
        <begin position="527"/>
        <end position="544"/>
    </location>
</feature>
<feature type="compositionally biased region" description="Basic and acidic residues" evidence="6">
    <location>
        <begin position="563"/>
        <end position="573"/>
    </location>
</feature>
<feature type="compositionally biased region" description="Pro residues" evidence="6">
    <location>
        <begin position="578"/>
        <end position="594"/>
    </location>
</feature>
<feature type="compositionally biased region" description="Pro residues" evidence="6">
    <location>
        <begin position="601"/>
        <end position="614"/>
    </location>
</feature>
<feature type="compositionally biased region" description="Low complexity" evidence="6">
    <location>
        <begin position="615"/>
        <end position="632"/>
    </location>
</feature>
<feature type="compositionally biased region" description="Low complexity" evidence="6">
    <location>
        <begin position="642"/>
        <end position="652"/>
    </location>
</feature>
<feature type="compositionally biased region" description="Pro residues" evidence="6">
    <location>
        <begin position="653"/>
        <end position="664"/>
    </location>
</feature>
<feature type="compositionally biased region" description="Polar residues" evidence="6">
    <location>
        <begin position="668"/>
        <end position="685"/>
    </location>
</feature>
<feature type="active site" description="Proton acceptor" evidence="4 5">
    <location>
        <position position="182"/>
    </location>
</feature>
<feature type="binding site" evidence="4">
    <location>
        <begin position="61"/>
        <end position="69"/>
    </location>
    <ligand>
        <name>ATP</name>
        <dbReference type="ChEBI" id="CHEBI:30616"/>
    </ligand>
</feature>
<feature type="binding site" evidence="4">
    <location>
        <position position="84"/>
    </location>
    <ligand>
        <name>ATP</name>
        <dbReference type="ChEBI" id="CHEBI:30616"/>
    </ligand>
</feature>
<feature type="modified residue" description="N-acetylalanine" evidence="3">
    <location>
        <position position="2"/>
    </location>
</feature>
<feature type="modified residue" description="Phosphoserine" evidence="3">
    <location>
        <position position="685"/>
    </location>
</feature>
<feature type="modified residue" description="Phosphothreonine" evidence="3">
    <location>
        <position position="698"/>
    </location>
</feature>